<gene>
    <name evidence="1" type="primary">lysS</name>
    <name type="ordered locus">spyM18_0663</name>
</gene>
<protein>
    <recommendedName>
        <fullName evidence="1">Lysine--tRNA ligase</fullName>
        <ecNumber evidence="1">6.1.1.6</ecNumber>
    </recommendedName>
    <alternativeName>
        <fullName evidence="1">Lysyl-tRNA synthetase</fullName>
        <shortName evidence="1">LysRS</shortName>
    </alternativeName>
</protein>
<keyword id="KW-0030">Aminoacyl-tRNA synthetase</keyword>
<keyword id="KW-0067">ATP-binding</keyword>
<keyword id="KW-0963">Cytoplasm</keyword>
<keyword id="KW-0436">Ligase</keyword>
<keyword id="KW-0460">Magnesium</keyword>
<keyword id="KW-0479">Metal-binding</keyword>
<keyword id="KW-0547">Nucleotide-binding</keyword>
<keyword id="KW-0648">Protein biosynthesis</keyword>
<feature type="chain" id="PRO_0000152692" description="Lysine--tRNA ligase">
    <location>
        <begin position="1"/>
        <end position="497"/>
    </location>
</feature>
<feature type="binding site" evidence="1">
    <location>
        <position position="409"/>
    </location>
    <ligand>
        <name>Mg(2+)</name>
        <dbReference type="ChEBI" id="CHEBI:18420"/>
        <label>1</label>
    </ligand>
</feature>
<feature type="binding site" evidence="1">
    <location>
        <position position="416"/>
    </location>
    <ligand>
        <name>Mg(2+)</name>
        <dbReference type="ChEBI" id="CHEBI:18420"/>
        <label>1</label>
    </ligand>
</feature>
<feature type="binding site" evidence="1">
    <location>
        <position position="416"/>
    </location>
    <ligand>
        <name>Mg(2+)</name>
        <dbReference type="ChEBI" id="CHEBI:18420"/>
        <label>2</label>
    </ligand>
</feature>
<reference key="1">
    <citation type="journal article" date="2002" name="Proc. Natl. Acad. Sci. U.S.A.">
        <title>Genome sequence and comparative microarray analysis of serotype M18 group A Streptococcus strains associated with acute rheumatic fever outbreaks.</title>
        <authorList>
            <person name="Smoot J.C."/>
            <person name="Barbian K.D."/>
            <person name="Van Gompel J.J."/>
            <person name="Smoot L.M."/>
            <person name="Chaussee M.S."/>
            <person name="Sylva G.L."/>
            <person name="Sturdevant D.E."/>
            <person name="Ricklefs S.M."/>
            <person name="Porcella S.F."/>
            <person name="Parkins L.D."/>
            <person name="Beres S.B."/>
            <person name="Campbell D.S."/>
            <person name="Smith T.M."/>
            <person name="Zhang Q."/>
            <person name="Kapur V."/>
            <person name="Daly J.A."/>
            <person name="Veasy L.G."/>
            <person name="Musser J.M."/>
        </authorList>
    </citation>
    <scope>NUCLEOTIDE SEQUENCE [LARGE SCALE GENOMIC DNA]</scope>
    <source>
        <strain>MGAS8232</strain>
    </source>
</reference>
<proteinExistence type="inferred from homology"/>
<accession>Q8P1X6</accession>
<comment type="catalytic activity">
    <reaction evidence="1">
        <text>tRNA(Lys) + L-lysine + ATP = L-lysyl-tRNA(Lys) + AMP + diphosphate</text>
        <dbReference type="Rhea" id="RHEA:20792"/>
        <dbReference type="Rhea" id="RHEA-COMP:9696"/>
        <dbReference type="Rhea" id="RHEA-COMP:9697"/>
        <dbReference type="ChEBI" id="CHEBI:30616"/>
        <dbReference type="ChEBI" id="CHEBI:32551"/>
        <dbReference type="ChEBI" id="CHEBI:33019"/>
        <dbReference type="ChEBI" id="CHEBI:78442"/>
        <dbReference type="ChEBI" id="CHEBI:78529"/>
        <dbReference type="ChEBI" id="CHEBI:456215"/>
        <dbReference type="EC" id="6.1.1.6"/>
    </reaction>
</comment>
<comment type="cofactor">
    <cofactor evidence="1">
        <name>Mg(2+)</name>
        <dbReference type="ChEBI" id="CHEBI:18420"/>
    </cofactor>
    <text evidence="1">Binds 3 Mg(2+) ions per subunit.</text>
</comment>
<comment type="subunit">
    <text evidence="1">Homodimer.</text>
</comment>
<comment type="subcellular location">
    <subcellularLocation>
        <location evidence="1">Cytoplasm</location>
    </subcellularLocation>
</comment>
<comment type="similarity">
    <text evidence="1">Belongs to the class-II aminoacyl-tRNA synthetase family.</text>
</comment>
<name>SYK_STRP8</name>
<sequence>MSNQHIEELNDQQIVRREKMMALAEQGIDPFGKRFDRTANSAELKEKYADKTKEELHELNETAIVAGRLMTKRGKGKVGFAHLQDREGQIQLYVRKDSVSEDNYEIFKKADLGDFIGVEGEVMRTDMGELSIKATKLTHLSKSLRPLPEKFHGLTDIETIYRKRHLDLISNRESFDRFVTRSKMISEIRRYLDGLDFLEVETPVLHNEAGGAAARPFVTHHNAQNIDMVLRIATELHLKRLIVGGMERVYEIGRIFRNEGMDATHNPEFTSIEVYQAYADYLDIMNLTEGIIQHAAKAVKGDGPIDYQGTEIRINEPFKRVHMVDAIKEVTGVDFWPEMTVEEAIALAKEKQVPLEKHFTSVGHIINAFFEEFVEETLVQPTFVFGHPVEVSPLAKKNPEDTRFTDRFELFIMTKEYANAFTELNDPIDQLSRFEAQAQAKELGDDEATGIDYDFVEALEYGMPPTGGLGIGIDRLCMLLTNTTTIRDVLLFPTMKP</sequence>
<organism>
    <name type="scientific">Streptococcus pyogenes serotype M18 (strain MGAS8232)</name>
    <dbReference type="NCBI Taxonomy" id="186103"/>
    <lineage>
        <taxon>Bacteria</taxon>
        <taxon>Bacillati</taxon>
        <taxon>Bacillota</taxon>
        <taxon>Bacilli</taxon>
        <taxon>Lactobacillales</taxon>
        <taxon>Streptococcaceae</taxon>
        <taxon>Streptococcus</taxon>
    </lineage>
</organism>
<evidence type="ECO:0000255" key="1">
    <source>
        <dbReference type="HAMAP-Rule" id="MF_00252"/>
    </source>
</evidence>
<dbReference type="EC" id="6.1.1.6" evidence="1"/>
<dbReference type="EMBL" id="AE009949">
    <property type="protein sequence ID" value="AAL97341.1"/>
    <property type="molecule type" value="Genomic_DNA"/>
</dbReference>
<dbReference type="RefSeq" id="WP_011017531.1">
    <property type="nucleotide sequence ID" value="NC_003485.1"/>
</dbReference>
<dbReference type="SMR" id="Q8P1X6"/>
<dbReference type="KEGG" id="spm:spyM18_0663"/>
<dbReference type="HOGENOM" id="CLU_008255_6_0_9"/>
<dbReference type="GO" id="GO:0005829">
    <property type="term" value="C:cytosol"/>
    <property type="evidence" value="ECO:0007669"/>
    <property type="project" value="TreeGrafter"/>
</dbReference>
<dbReference type="GO" id="GO:0005524">
    <property type="term" value="F:ATP binding"/>
    <property type="evidence" value="ECO:0007669"/>
    <property type="project" value="UniProtKB-UniRule"/>
</dbReference>
<dbReference type="GO" id="GO:0140096">
    <property type="term" value="F:catalytic activity, acting on a protein"/>
    <property type="evidence" value="ECO:0007669"/>
    <property type="project" value="UniProtKB-ARBA"/>
</dbReference>
<dbReference type="GO" id="GO:0004824">
    <property type="term" value="F:lysine-tRNA ligase activity"/>
    <property type="evidence" value="ECO:0007669"/>
    <property type="project" value="UniProtKB-UniRule"/>
</dbReference>
<dbReference type="GO" id="GO:0000287">
    <property type="term" value="F:magnesium ion binding"/>
    <property type="evidence" value="ECO:0007669"/>
    <property type="project" value="UniProtKB-UniRule"/>
</dbReference>
<dbReference type="GO" id="GO:0016740">
    <property type="term" value="F:transferase activity"/>
    <property type="evidence" value="ECO:0007669"/>
    <property type="project" value="UniProtKB-ARBA"/>
</dbReference>
<dbReference type="GO" id="GO:0000049">
    <property type="term" value="F:tRNA binding"/>
    <property type="evidence" value="ECO:0007669"/>
    <property type="project" value="TreeGrafter"/>
</dbReference>
<dbReference type="GO" id="GO:0006430">
    <property type="term" value="P:lysyl-tRNA aminoacylation"/>
    <property type="evidence" value="ECO:0007669"/>
    <property type="project" value="UniProtKB-UniRule"/>
</dbReference>
<dbReference type="CDD" id="cd00775">
    <property type="entry name" value="LysRS_core"/>
    <property type="match status" value="1"/>
</dbReference>
<dbReference type="CDD" id="cd04322">
    <property type="entry name" value="LysRS_N"/>
    <property type="match status" value="1"/>
</dbReference>
<dbReference type="FunFam" id="2.40.50.140:FF:000024">
    <property type="entry name" value="Lysine--tRNA ligase"/>
    <property type="match status" value="1"/>
</dbReference>
<dbReference type="FunFam" id="3.30.930.10:FF:000001">
    <property type="entry name" value="Lysine--tRNA ligase"/>
    <property type="match status" value="1"/>
</dbReference>
<dbReference type="Gene3D" id="3.30.930.10">
    <property type="entry name" value="Bira Bifunctional Protein, Domain 2"/>
    <property type="match status" value="1"/>
</dbReference>
<dbReference type="Gene3D" id="2.40.50.140">
    <property type="entry name" value="Nucleic acid-binding proteins"/>
    <property type="match status" value="1"/>
</dbReference>
<dbReference type="HAMAP" id="MF_00252">
    <property type="entry name" value="Lys_tRNA_synth_class2"/>
    <property type="match status" value="1"/>
</dbReference>
<dbReference type="InterPro" id="IPR004364">
    <property type="entry name" value="Aa-tRNA-synt_II"/>
</dbReference>
<dbReference type="InterPro" id="IPR006195">
    <property type="entry name" value="aa-tRNA-synth_II"/>
</dbReference>
<dbReference type="InterPro" id="IPR045864">
    <property type="entry name" value="aa-tRNA-synth_II/BPL/LPL"/>
</dbReference>
<dbReference type="InterPro" id="IPR002313">
    <property type="entry name" value="Lys-tRNA-ligase_II"/>
</dbReference>
<dbReference type="InterPro" id="IPR044136">
    <property type="entry name" value="Lys-tRNA-ligase_II_N"/>
</dbReference>
<dbReference type="InterPro" id="IPR018149">
    <property type="entry name" value="Lys-tRNA-synth_II_C"/>
</dbReference>
<dbReference type="InterPro" id="IPR012340">
    <property type="entry name" value="NA-bd_OB-fold"/>
</dbReference>
<dbReference type="InterPro" id="IPR004365">
    <property type="entry name" value="NA-bd_OB_tRNA"/>
</dbReference>
<dbReference type="NCBIfam" id="TIGR00499">
    <property type="entry name" value="lysS_bact"/>
    <property type="match status" value="1"/>
</dbReference>
<dbReference type="NCBIfam" id="NF001756">
    <property type="entry name" value="PRK00484.1"/>
    <property type="match status" value="1"/>
</dbReference>
<dbReference type="PANTHER" id="PTHR42918:SF15">
    <property type="entry name" value="LYSINE--TRNA LIGASE, CHLOROPLASTIC_MITOCHONDRIAL"/>
    <property type="match status" value="1"/>
</dbReference>
<dbReference type="PANTHER" id="PTHR42918">
    <property type="entry name" value="LYSYL-TRNA SYNTHETASE"/>
    <property type="match status" value="1"/>
</dbReference>
<dbReference type="Pfam" id="PF00152">
    <property type="entry name" value="tRNA-synt_2"/>
    <property type="match status" value="1"/>
</dbReference>
<dbReference type="Pfam" id="PF01336">
    <property type="entry name" value="tRNA_anti-codon"/>
    <property type="match status" value="1"/>
</dbReference>
<dbReference type="PRINTS" id="PR00982">
    <property type="entry name" value="TRNASYNTHLYS"/>
</dbReference>
<dbReference type="SUPFAM" id="SSF55681">
    <property type="entry name" value="Class II aaRS and biotin synthetases"/>
    <property type="match status" value="1"/>
</dbReference>
<dbReference type="SUPFAM" id="SSF50249">
    <property type="entry name" value="Nucleic acid-binding proteins"/>
    <property type="match status" value="1"/>
</dbReference>
<dbReference type="PROSITE" id="PS50862">
    <property type="entry name" value="AA_TRNA_LIGASE_II"/>
    <property type="match status" value="1"/>
</dbReference>